<proteinExistence type="inferred from homology"/>
<protein>
    <recommendedName>
        <fullName evidence="1">Protein TIC 214</fullName>
    </recommendedName>
    <alternativeName>
        <fullName evidence="1">Translocon at the inner envelope membrane of chloroplasts 214</fullName>
        <shortName evidence="1">AtTIC214</shortName>
    </alternativeName>
</protein>
<comment type="function">
    <text evidence="1">Involved in protein precursor import into chloroplasts. May be part of an intermediate translocation complex acting as a protein-conducting channel at the inner envelope.</text>
</comment>
<comment type="subunit">
    <text evidence="1">Part of the Tic complex.</text>
</comment>
<comment type="subcellular location">
    <subcellularLocation>
        <location evidence="1">Plastid</location>
        <location evidence="1">Chloroplast inner membrane</location>
        <topology evidence="2">Multi-pass membrane protein</topology>
    </subcellularLocation>
</comment>
<comment type="miscellaneous">
    <text>There is a partial copy of the N-terminus (positions 1-337) of ycf1 in the inverted repeat (BAE48059).</text>
</comment>
<comment type="similarity">
    <text evidence="4">Belongs to the TIC214 family.</text>
</comment>
<comment type="sequence caution" evidence="4">
    <conflict type="erroneous initiation">
        <sequence resource="EMBL-CDS" id="BAE48059"/>
    </conflict>
</comment>
<feature type="chain" id="PRO_0000262618" description="Protein TIC 214">
    <location>
        <begin position="1"/>
        <end position="1892"/>
    </location>
</feature>
<feature type="transmembrane region" description="Helical" evidence="2">
    <location>
        <begin position="18"/>
        <end position="38"/>
    </location>
</feature>
<feature type="transmembrane region" description="Helical" evidence="2">
    <location>
        <begin position="64"/>
        <end position="84"/>
    </location>
</feature>
<feature type="transmembrane region" description="Helical" evidence="2">
    <location>
        <begin position="87"/>
        <end position="107"/>
    </location>
</feature>
<feature type="transmembrane region" description="Helical" evidence="2">
    <location>
        <begin position="124"/>
        <end position="144"/>
    </location>
</feature>
<feature type="transmembrane region" description="Helical" evidence="2">
    <location>
        <begin position="172"/>
        <end position="192"/>
    </location>
</feature>
<feature type="transmembrane region" description="Helical" evidence="2">
    <location>
        <begin position="221"/>
        <end position="241"/>
    </location>
</feature>
<feature type="region of interest" description="Disordered" evidence="3">
    <location>
        <begin position="250"/>
        <end position="300"/>
    </location>
</feature>
<feature type="region of interest" description="Disordered" evidence="3">
    <location>
        <begin position="794"/>
        <end position="814"/>
    </location>
</feature>
<feature type="region of interest" description="Disordered" evidence="3">
    <location>
        <begin position="1581"/>
        <end position="1609"/>
    </location>
</feature>
<feature type="compositionally biased region" description="Acidic residues" evidence="3">
    <location>
        <begin position="256"/>
        <end position="268"/>
    </location>
</feature>
<feature type="compositionally biased region" description="Basic and acidic residues" evidence="3">
    <location>
        <begin position="1581"/>
        <end position="1602"/>
    </location>
</feature>
<feature type="sequence conflict" description="In Ref. 1; BAE48059." evidence="4" ref="1">
    <original>P</original>
    <variation>E</variation>
    <location>
        <position position="337"/>
    </location>
</feature>
<keyword id="KW-0150">Chloroplast</keyword>
<keyword id="KW-0472">Membrane</keyword>
<keyword id="KW-0934">Plastid</keyword>
<keyword id="KW-1001">Plastid inner membrane</keyword>
<keyword id="KW-0653">Protein transport</keyword>
<keyword id="KW-0812">Transmembrane</keyword>
<keyword id="KW-1133">Transmembrane helix</keyword>
<keyword id="KW-0813">Transport</keyword>
<organism>
    <name type="scientific">Nicotiana tomentosiformis</name>
    <name type="common">Tobacco</name>
    <dbReference type="NCBI Taxonomy" id="4098"/>
    <lineage>
        <taxon>Eukaryota</taxon>
        <taxon>Viridiplantae</taxon>
        <taxon>Streptophyta</taxon>
        <taxon>Embryophyta</taxon>
        <taxon>Tracheophyta</taxon>
        <taxon>Spermatophyta</taxon>
        <taxon>Magnoliopsida</taxon>
        <taxon>eudicotyledons</taxon>
        <taxon>Gunneridae</taxon>
        <taxon>Pentapetalae</taxon>
        <taxon>asterids</taxon>
        <taxon>lamiids</taxon>
        <taxon>Solanales</taxon>
        <taxon>Solanaceae</taxon>
        <taxon>Nicotianoideae</taxon>
        <taxon>Nicotianeae</taxon>
        <taxon>Nicotiana</taxon>
    </lineage>
</organism>
<geneLocation type="chloroplast"/>
<name>TI214_NICTO</name>
<sequence length="1892" mass="225429">MIFQSFLLGNLVSLCMKIINSVVVVGLYYGFLTTFSIGPSYLFLLRALVMEEGTEKKVSATTGFITGQLMMFISIYYAPLHLALGRPHTITVLALPYLLFHFFWNNHKHFFDYGSTTRNSMRNLSIQCVFLNNLIFQLFNHFILPSSMLARLVNIYLFRCNSKILFVTSGFVGWLIGHIFFMKWLGLVLVWIRQNHSIRSNKYIRSNKYLVLELRNSMARIFSILLFITCVYYLGRIPSPILTKKLKEASKTEERVESEEEKDVEIETASEMKGTKQEQEGSTEEDPYPSPSLFSEEGWDPDKIDETEEIRVNGKDKIKDKFHSHLTETGYNTSNCPIYDYEDSYLNNNNTGNPENFKLQLLDKKNENKELFWFQQPLVSLLFDYNRWNRPFRYIKNNRFEQAVRTEMSQYFFDTCKSDGKQRISFTYPPSLSTFWKMIKRRIPLLSLQKRLPNELDNQWISTNKEKSTNLNKEFLNRLEVLDKESFSLDILETRTRLCNDDTKKEYVPKMYDPLLNGPYRGTIKKEFSPSIINNTSLENLKERVRINRIHTIFLPNTDYQEFEQKVDTVDKKPLSTEIDEFLTLINEFDNEPKSSLNLKDLSLFSDQEQGRVNSEKRTKFVKFVFNAIDPNGTTSEKKLIGIKEISKKIPRWSHKLITELEQQSGDYQEGVPLDHQIRSRKAKRVVIFTANNQNNDPNTKDTDTADQDQTKEVALIRYSQQPDFRRGIIKGSMRAQRRKTVIWKLFQANVHSPLFLERITPPLLFSFDISGLIKPIFRNWSGKEGEFKILESREEQTKREEKKEKDKKGENKRKEKARIEIAEAWDTIPFAQIIRGYMLITQSILRKYIVLPSLIIAKNLGRMLFLQLPEWSEDLQEWNREMHIKCTYNGVQLSETEFPKNWLKDGIQIKILFPFCLKPWHISKLYSSRGELMKKKKQKDDFCFLTVWGMEAELPFGSPRKRPSFFEPIFKELEKKIGKFKKKYFITLKVLKGKIKLFRRVSKETKKWLIKSSLFIKKMKKELSKVNPIVLFRFKEIDESNETKKEKDSLISNQIINEPFSQIESGNWPNSSLIESKMKDLTDRTSTIKNQIERITKEKKKVTPEIDISPNKSPNKTNNIKKFESPKNIFQILKRRNTRLIWKFHYFLKFFIQRLYIDLFLSIINIPRINTQLFLESTNKLIDKYISKNEINQKKIHFISTIKKSLYNISKKNSHIFFDLSYLSQAYVFYKLSQTQVINLSKLRSVLQYNRTSFFLKTKLKDYFRTLGIFHSELKHKKLQSYRINQWKNWLRRHYQYDLSQIRWSRLMPQKRRNRVNQSCMAQNRNLNKWNSYEKDQLIHYKKENDSELYSLSNQKDNFKKCYRYDLLAYKSINYENKNDSFICRLPFQVNKNLEISSNSNTSKHNLFYMLGNLHINNYLRKGNILYIERNLDRKYFDWKIIHFSLRQKEDIEAWVKSDTNSNPNTKIGINNYQIIDKIEKKGLFYLTIHQNPENNQKNSKNDFFDWMGMNEKILNRPILNLEFWLFPEFVPFYNVYKIKPWIIPSKLLLLNLNTNENVSQNKNKKQNFFLRSNKKIKNRIQEEKEPASQGEKERGSDIENKGNLGPVLSKHQNALKKDYTESDTKKGKKKKQYKSNTEAELDLFLKRYLLFQLRWNDALNQRMIENIKVYCLLLRLINPSKIAISSIQRREMSLDIMLIQKNLTLTELMKKGILIIEPIRLSVKNNGQFIMYQTIGISLVHKSKHQTNQRYPEQRYVDKKNFDEFILQPQTQRINTDKNHFDLLVPENILWSRRRRELRIRSFFNSLNWNGVDRNSVFCNENNVKNWSQFLDERKPLYKEKNELIKLKFFLWPNYRLEDLACMNRYWFDTNNGSRFSILRIHMYPRLKIN</sequence>
<dbReference type="EMBL" id="AB240139">
    <property type="protein sequence ID" value="BAE48071.1"/>
    <property type="molecule type" value="Genomic_DNA"/>
</dbReference>
<dbReference type="EMBL" id="AB240139">
    <property type="protein sequence ID" value="BAE48059.1"/>
    <property type="status" value="ALT_INIT"/>
    <property type="molecule type" value="Genomic_DNA"/>
</dbReference>
<dbReference type="RefSeq" id="YP_398919.1">
    <property type="nucleotide sequence ID" value="NC_007602.1"/>
</dbReference>
<dbReference type="KEGG" id="nto:3776313"/>
<dbReference type="KEGG" id="nto:3776412"/>
<dbReference type="OrthoDB" id="1938219at2759"/>
<dbReference type="GO" id="GO:0009706">
    <property type="term" value="C:chloroplast inner membrane"/>
    <property type="evidence" value="ECO:0007669"/>
    <property type="project" value="UniProtKB-SubCell"/>
</dbReference>
<dbReference type="GO" id="GO:0015031">
    <property type="term" value="P:protein transport"/>
    <property type="evidence" value="ECO:0007669"/>
    <property type="project" value="UniProtKB-KW"/>
</dbReference>
<dbReference type="InterPro" id="IPR008896">
    <property type="entry name" value="TIC214"/>
</dbReference>
<dbReference type="PANTHER" id="PTHR33163">
    <property type="entry name" value="PROTEIN TIC 214-RELATED"/>
    <property type="match status" value="1"/>
</dbReference>
<dbReference type="PANTHER" id="PTHR33163:SF47">
    <property type="entry name" value="TRANSLOCON AT THE INNER ENVELOPE MEMBRANE OF CHLOROPLASTS 214"/>
    <property type="match status" value="1"/>
</dbReference>
<dbReference type="Pfam" id="PF05758">
    <property type="entry name" value="Ycf1"/>
    <property type="match status" value="1"/>
</dbReference>
<reference key="1">
    <citation type="journal article" date="2006" name="Mol. Genet. Genomics">
        <title>The chloroplast genome of Nicotiana sylvestris and Nicotiana tomentosiformis: complete sequencing confirms that the Nicotiana sylvestris progenitor is the maternal genome donor of Nicotiana tabacum.</title>
        <authorList>
            <person name="Yukawa M."/>
            <person name="Tsudzuki T."/>
            <person name="Sugiura M."/>
        </authorList>
    </citation>
    <scope>NUCLEOTIDE SEQUENCE [LARGE SCALE GENOMIC DNA]</scope>
</reference>
<gene>
    <name evidence="1" type="primary">TIC214</name>
    <name type="synonym">ycf1-A</name>
</gene>
<gene>
    <name evidence="1" type="primary">TIC214</name>
    <name type="synonym">ycf1-B</name>
</gene>
<accession>Q33BW4</accession>
<accession>Q33BX6</accession>
<evidence type="ECO:0000250" key="1">
    <source>
        <dbReference type="UniProtKB" id="P56785"/>
    </source>
</evidence>
<evidence type="ECO:0000255" key="2"/>
<evidence type="ECO:0000256" key="3">
    <source>
        <dbReference type="SAM" id="MobiDB-lite"/>
    </source>
</evidence>
<evidence type="ECO:0000305" key="4"/>